<keyword id="KW-0143">Chaperone</keyword>
<keyword id="KW-0963">Cytoplasm</keyword>
<keyword id="KW-1185">Reference proteome</keyword>
<keyword id="KW-0346">Stress response</keyword>
<sequence>MSNQDEPQNSPEEFAEDQQADVALEEASSDSSETAADVDLVARIEALEAELTEAKEQALRAAAEMHNVRRRAEQDVEKAHKFGLEKFVSDMLPVADNLGRALEAAAAEGADMTAVTEGVDLTLKSLMDSLKKHGVESVNPEGEPFNPELHQAMTAVENPDAEPNTVINVYQVGYTLHGRLVRPAMVVVSK</sequence>
<organism>
    <name type="scientific">Teredinibacter turnerae (strain ATCC 39867 / T7901)</name>
    <dbReference type="NCBI Taxonomy" id="377629"/>
    <lineage>
        <taxon>Bacteria</taxon>
        <taxon>Pseudomonadati</taxon>
        <taxon>Pseudomonadota</taxon>
        <taxon>Gammaproteobacteria</taxon>
        <taxon>Cellvibrionales</taxon>
        <taxon>Cellvibrionaceae</taxon>
        <taxon>Teredinibacter</taxon>
    </lineage>
</organism>
<evidence type="ECO:0000255" key="1">
    <source>
        <dbReference type="HAMAP-Rule" id="MF_01151"/>
    </source>
</evidence>
<evidence type="ECO:0000256" key="2">
    <source>
        <dbReference type="SAM" id="MobiDB-lite"/>
    </source>
</evidence>
<gene>
    <name evidence="1" type="primary">grpE</name>
    <name type="ordered locus">TERTU_3297</name>
</gene>
<name>GRPE_TERTT</name>
<protein>
    <recommendedName>
        <fullName evidence="1">Protein GrpE</fullName>
    </recommendedName>
    <alternativeName>
        <fullName evidence="1">HSP-70 cofactor</fullName>
    </alternativeName>
</protein>
<dbReference type="EMBL" id="CP001614">
    <property type="protein sequence ID" value="ACR10834.1"/>
    <property type="molecule type" value="Genomic_DNA"/>
</dbReference>
<dbReference type="SMR" id="C5BQ34"/>
<dbReference type="STRING" id="377629.TERTU_3297"/>
<dbReference type="KEGG" id="ttu:TERTU_3297"/>
<dbReference type="eggNOG" id="COG0576">
    <property type="taxonomic scope" value="Bacteria"/>
</dbReference>
<dbReference type="HOGENOM" id="CLU_057217_6_0_6"/>
<dbReference type="Proteomes" id="UP000009080">
    <property type="component" value="Chromosome"/>
</dbReference>
<dbReference type="GO" id="GO:0005829">
    <property type="term" value="C:cytosol"/>
    <property type="evidence" value="ECO:0007669"/>
    <property type="project" value="TreeGrafter"/>
</dbReference>
<dbReference type="GO" id="GO:0000774">
    <property type="term" value="F:adenyl-nucleotide exchange factor activity"/>
    <property type="evidence" value="ECO:0007669"/>
    <property type="project" value="InterPro"/>
</dbReference>
<dbReference type="GO" id="GO:0042803">
    <property type="term" value="F:protein homodimerization activity"/>
    <property type="evidence" value="ECO:0007669"/>
    <property type="project" value="InterPro"/>
</dbReference>
<dbReference type="GO" id="GO:0051087">
    <property type="term" value="F:protein-folding chaperone binding"/>
    <property type="evidence" value="ECO:0007669"/>
    <property type="project" value="InterPro"/>
</dbReference>
<dbReference type="GO" id="GO:0051082">
    <property type="term" value="F:unfolded protein binding"/>
    <property type="evidence" value="ECO:0007669"/>
    <property type="project" value="TreeGrafter"/>
</dbReference>
<dbReference type="GO" id="GO:0006457">
    <property type="term" value="P:protein folding"/>
    <property type="evidence" value="ECO:0007669"/>
    <property type="project" value="InterPro"/>
</dbReference>
<dbReference type="CDD" id="cd00446">
    <property type="entry name" value="GrpE"/>
    <property type="match status" value="1"/>
</dbReference>
<dbReference type="FunFam" id="2.30.22.10:FF:000001">
    <property type="entry name" value="Protein GrpE"/>
    <property type="match status" value="1"/>
</dbReference>
<dbReference type="Gene3D" id="3.90.20.20">
    <property type="match status" value="1"/>
</dbReference>
<dbReference type="Gene3D" id="2.30.22.10">
    <property type="entry name" value="Head domain of nucleotide exchange factor GrpE"/>
    <property type="match status" value="1"/>
</dbReference>
<dbReference type="HAMAP" id="MF_01151">
    <property type="entry name" value="GrpE"/>
    <property type="match status" value="1"/>
</dbReference>
<dbReference type="InterPro" id="IPR000740">
    <property type="entry name" value="GrpE"/>
</dbReference>
<dbReference type="InterPro" id="IPR013805">
    <property type="entry name" value="GrpE_coiled_coil"/>
</dbReference>
<dbReference type="InterPro" id="IPR009012">
    <property type="entry name" value="GrpE_head"/>
</dbReference>
<dbReference type="NCBIfam" id="NF010737">
    <property type="entry name" value="PRK14139.1"/>
    <property type="match status" value="1"/>
</dbReference>
<dbReference type="NCBIfam" id="NF010738">
    <property type="entry name" value="PRK14140.1"/>
    <property type="match status" value="1"/>
</dbReference>
<dbReference type="NCBIfam" id="NF010748">
    <property type="entry name" value="PRK14150.1"/>
    <property type="match status" value="1"/>
</dbReference>
<dbReference type="NCBIfam" id="NF010749">
    <property type="entry name" value="PRK14151.1"/>
    <property type="match status" value="1"/>
</dbReference>
<dbReference type="PANTHER" id="PTHR21237">
    <property type="entry name" value="GRPE PROTEIN"/>
    <property type="match status" value="1"/>
</dbReference>
<dbReference type="PANTHER" id="PTHR21237:SF23">
    <property type="entry name" value="GRPE PROTEIN HOMOLOG, MITOCHONDRIAL"/>
    <property type="match status" value="1"/>
</dbReference>
<dbReference type="Pfam" id="PF01025">
    <property type="entry name" value="GrpE"/>
    <property type="match status" value="1"/>
</dbReference>
<dbReference type="PRINTS" id="PR00773">
    <property type="entry name" value="GRPEPROTEIN"/>
</dbReference>
<dbReference type="SUPFAM" id="SSF58014">
    <property type="entry name" value="Coiled-coil domain of nucleotide exchange factor GrpE"/>
    <property type="match status" value="1"/>
</dbReference>
<dbReference type="SUPFAM" id="SSF51064">
    <property type="entry name" value="Head domain of nucleotide exchange factor GrpE"/>
    <property type="match status" value="1"/>
</dbReference>
<dbReference type="PROSITE" id="PS01071">
    <property type="entry name" value="GRPE"/>
    <property type="match status" value="1"/>
</dbReference>
<proteinExistence type="inferred from homology"/>
<comment type="function">
    <text evidence="1">Participates actively in the response to hyperosmotic and heat shock by preventing the aggregation of stress-denatured proteins, in association with DnaK and GrpE. It is the nucleotide exchange factor for DnaK and may function as a thermosensor. Unfolded proteins bind initially to DnaJ; upon interaction with the DnaJ-bound protein, DnaK hydrolyzes its bound ATP, resulting in the formation of a stable complex. GrpE releases ADP from DnaK; ATP binding to DnaK triggers the release of the substrate protein, thus completing the reaction cycle. Several rounds of ATP-dependent interactions between DnaJ, DnaK and GrpE are required for fully efficient folding.</text>
</comment>
<comment type="subunit">
    <text evidence="1">Homodimer.</text>
</comment>
<comment type="subcellular location">
    <subcellularLocation>
        <location evidence="1">Cytoplasm</location>
    </subcellularLocation>
</comment>
<comment type="similarity">
    <text evidence="1">Belongs to the GrpE family.</text>
</comment>
<accession>C5BQ34</accession>
<reference key="1">
    <citation type="journal article" date="2009" name="PLoS ONE">
        <title>The complete genome of Teredinibacter turnerae T7901: an intracellular endosymbiont of marine wood-boring bivalves (shipworms).</title>
        <authorList>
            <person name="Yang J.C."/>
            <person name="Madupu R."/>
            <person name="Durkin A.S."/>
            <person name="Ekborg N.A."/>
            <person name="Pedamallu C.S."/>
            <person name="Hostetler J.B."/>
            <person name="Radune D."/>
            <person name="Toms B.S."/>
            <person name="Henrissat B."/>
            <person name="Coutinho P.M."/>
            <person name="Schwarz S."/>
            <person name="Field L."/>
            <person name="Trindade-Silva A.E."/>
            <person name="Soares C.A.G."/>
            <person name="Elshahawi S."/>
            <person name="Hanora A."/>
            <person name="Schmidt E.W."/>
            <person name="Haygood M.G."/>
            <person name="Posfai J."/>
            <person name="Benner J."/>
            <person name="Madinger C."/>
            <person name="Nove J."/>
            <person name="Anton B."/>
            <person name="Chaudhary K."/>
            <person name="Foster J."/>
            <person name="Holman A."/>
            <person name="Kumar S."/>
            <person name="Lessard P.A."/>
            <person name="Luyten Y.A."/>
            <person name="Slatko B."/>
            <person name="Wood N."/>
            <person name="Wu B."/>
            <person name="Teplitski M."/>
            <person name="Mougous J.D."/>
            <person name="Ward N."/>
            <person name="Eisen J.A."/>
            <person name="Badger J.H."/>
            <person name="Distel D.L."/>
        </authorList>
    </citation>
    <scope>NUCLEOTIDE SEQUENCE [LARGE SCALE GENOMIC DNA]</scope>
    <source>
        <strain>ATCC 39867 / T7901</strain>
    </source>
</reference>
<feature type="chain" id="PRO_1000213677" description="Protein GrpE">
    <location>
        <begin position="1"/>
        <end position="190"/>
    </location>
</feature>
<feature type="region of interest" description="Disordered" evidence="2">
    <location>
        <begin position="1"/>
        <end position="36"/>
    </location>
</feature>
<feature type="compositionally biased region" description="Polar residues" evidence="2">
    <location>
        <begin position="1"/>
        <end position="11"/>
    </location>
</feature>
<feature type="compositionally biased region" description="Acidic residues" evidence="2">
    <location>
        <begin position="13"/>
        <end position="28"/>
    </location>
</feature>